<keyword id="KW-0007">Acetylation</keyword>
<keyword id="KW-0249">Electron transport</keyword>
<keyword id="KW-0349">Heme</keyword>
<keyword id="KW-0408">Iron</keyword>
<keyword id="KW-0479">Metal-binding</keyword>
<keyword id="KW-0496">Mitochondrion</keyword>
<keyword id="KW-1185">Reference proteome</keyword>
<keyword id="KW-0679">Respiratory chain</keyword>
<keyword id="KW-0813">Transport</keyword>
<gene>
    <name type="primary">cyc</name>
    <name type="ORF">zgc:86706</name>
</gene>
<dbReference type="EMBL" id="BC071383">
    <property type="protein sequence ID" value="AAH71383.1"/>
    <property type="molecule type" value="mRNA"/>
</dbReference>
<dbReference type="RefSeq" id="NP_001002068.1">
    <property type="nucleotide sequence ID" value="NM_001002068.1"/>
</dbReference>
<dbReference type="SMR" id="Q6IQM2"/>
<dbReference type="FunCoup" id="Q6IQM2">
    <property type="interactions" value="2642"/>
</dbReference>
<dbReference type="STRING" id="7955.ENSDARP00000034555"/>
<dbReference type="PaxDb" id="7955-ENSDARP00000034555"/>
<dbReference type="Ensembl" id="ENSDART00000036456">
    <property type="protein sequence ID" value="ENSDARP00000034555"/>
    <property type="gene ID" value="ENSDARG00000044562"/>
</dbReference>
<dbReference type="GeneID" id="415158"/>
<dbReference type="KEGG" id="dre:415158"/>
<dbReference type="AGR" id="ZFIN:ZDB-GENE-040625-38"/>
<dbReference type="CTD" id="415158"/>
<dbReference type="ZFIN" id="ZDB-GENE-040625-38">
    <property type="gene designation" value="cycsb"/>
</dbReference>
<dbReference type="eggNOG" id="KOG3453">
    <property type="taxonomic scope" value="Eukaryota"/>
</dbReference>
<dbReference type="HOGENOM" id="CLU_060944_3_0_1"/>
<dbReference type="InParanoid" id="Q6IQM2"/>
<dbReference type="OMA" id="KARCAQC"/>
<dbReference type="OrthoDB" id="449280at2759"/>
<dbReference type="PhylomeDB" id="Q6IQM2"/>
<dbReference type="TreeFam" id="TF300226"/>
<dbReference type="Reactome" id="R-DRE-111457">
    <property type="pathway name" value="Release of apoptotic factors from the mitochondria"/>
</dbReference>
<dbReference type="Reactome" id="R-DRE-111458">
    <property type="pathway name" value="Formation of apoptosome"/>
</dbReference>
<dbReference type="Reactome" id="R-DRE-111459">
    <property type="pathway name" value="Activation of caspases through apoptosome-mediated cleavage"/>
</dbReference>
<dbReference type="Reactome" id="R-DRE-2151201">
    <property type="pathway name" value="Transcriptional activation of mitochondrial biogenesis"/>
</dbReference>
<dbReference type="Reactome" id="R-DRE-3299685">
    <property type="pathway name" value="Detoxification of Reactive Oxygen Species"/>
</dbReference>
<dbReference type="Reactome" id="R-DRE-5620971">
    <property type="pathway name" value="Pyroptosis"/>
</dbReference>
<dbReference type="Reactome" id="R-DRE-5628897">
    <property type="pathway name" value="TP53 Regulates Metabolic Genes"/>
</dbReference>
<dbReference type="Reactome" id="R-DRE-611105">
    <property type="pathway name" value="Respiratory electron transport"/>
</dbReference>
<dbReference type="Reactome" id="R-DRE-9627069">
    <property type="pathway name" value="Regulation of the apoptosome activity"/>
</dbReference>
<dbReference type="Reactome" id="R-DRE-9707564">
    <property type="pathway name" value="Cytoprotection by HMOX1"/>
</dbReference>
<dbReference type="PRO" id="PR:Q6IQM2"/>
<dbReference type="Proteomes" id="UP000000437">
    <property type="component" value="Chromosome 6"/>
</dbReference>
<dbReference type="Bgee" id="ENSDARG00000044562">
    <property type="expression patterns" value="Expressed in somite and 29 other cell types or tissues"/>
</dbReference>
<dbReference type="GO" id="GO:0005758">
    <property type="term" value="C:mitochondrial intermembrane space"/>
    <property type="evidence" value="ECO:0000318"/>
    <property type="project" value="GO_Central"/>
</dbReference>
<dbReference type="GO" id="GO:0009055">
    <property type="term" value="F:electron transfer activity"/>
    <property type="evidence" value="ECO:0000318"/>
    <property type="project" value="GO_Central"/>
</dbReference>
<dbReference type="GO" id="GO:0020037">
    <property type="term" value="F:heme binding"/>
    <property type="evidence" value="ECO:0007669"/>
    <property type="project" value="InterPro"/>
</dbReference>
<dbReference type="GO" id="GO:0046872">
    <property type="term" value="F:metal ion binding"/>
    <property type="evidence" value="ECO:0007669"/>
    <property type="project" value="UniProtKB-KW"/>
</dbReference>
<dbReference type="GO" id="GO:0006123">
    <property type="term" value="P:mitochondrial electron transport, cytochrome c to oxygen"/>
    <property type="evidence" value="ECO:0000318"/>
    <property type="project" value="GO_Central"/>
</dbReference>
<dbReference type="GO" id="GO:0006122">
    <property type="term" value="P:mitochondrial electron transport, ubiquinol to cytochrome c"/>
    <property type="evidence" value="ECO:0000318"/>
    <property type="project" value="GO_Central"/>
</dbReference>
<dbReference type="FunFam" id="1.10.760.10:FF:000008">
    <property type="entry name" value="Cytochrome c"/>
    <property type="match status" value="1"/>
</dbReference>
<dbReference type="Gene3D" id="1.10.760.10">
    <property type="entry name" value="Cytochrome c-like domain"/>
    <property type="match status" value="1"/>
</dbReference>
<dbReference type="InterPro" id="IPR009056">
    <property type="entry name" value="Cyt_c-like_dom"/>
</dbReference>
<dbReference type="InterPro" id="IPR036909">
    <property type="entry name" value="Cyt_c-like_dom_sf"/>
</dbReference>
<dbReference type="InterPro" id="IPR002327">
    <property type="entry name" value="Cyt_c_1A/1B"/>
</dbReference>
<dbReference type="PANTHER" id="PTHR11961">
    <property type="entry name" value="CYTOCHROME C"/>
    <property type="match status" value="1"/>
</dbReference>
<dbReference type="Pfam" id="PF00034">
    <property type="entry name" value="Cytochrom_C"/>
    <property type="match status" value="1"/>
</dbReference>
<dbReference type="PRINTS" id="PR00604">
    <property type="entry name" value="CYTCHRMECIAB"/>
</dbReference>
<dbReference type="SUPFAM" id="SSF46626">
    <property type="entry name" value="Cytochrome c"/>
    <property type="match status" value="1"/>
</dbReference>
<dbReference type="PROSITE" id="PS51007">
    <property type="entry name" value="CYTC"/>
    <property type="match status" value="1"/>
</dbReference>
<feature type="initiator methionine" description="Removed" evidence="1">
    <location>
        <position position="1"/>
    </location>
</feature>
<feature type="chain" id="PRO_0000108250" description="Cytochrome c">
    <location>
        <begin position="2"/>
        <end position="104"/>
    </location>
</feature>
<feature type="binding site" description="covalent">
    <location>
        <position position="15"/>
    </location>
    <ligand>
        <name>heme c</name>
        <dbReference type="ChEBI" id="CHEBI:61717"/>
    </ligand>
</feature>
<feature type="binding site" description="covalent">
    <location>
        <position position="18"/>
    </location>
    <ligand>
        <name>heme c</name>
        <dbReference type="ChEBI" id="CHEBI:61717"/>
    </ligand>
</feature>
<feature type="binding site" description="axial binding residue">
    <location>
        <position position="19"/>
    </location>
    <ligand>
        <name>heme c</name>
        <dbReference type="ChEBI" id="CHEBI:61717"/>
    </ligand>
    <ligandPart>
        <name>Fe</name>
        <dbReference type="ChEBI" id="CHEBI:18248"/>
    </ligandPart>
</feature>
<feature type="binding site" description="axial binding residue">
    <location>
        <position position="81"/>
    </location>
    <ligand>
        <name>heme c</name>
        <dbReference type="ChEBI" id="CHEBI:61717"/>
    </ligand>
    <ligandPart>
        <name>Fe</name>
        <dbReference type="ChEBI" id="CHEBI:18248"/>
    </ligandPart>
</feature>
<feature type="modified residue" description="N-acetylglycine" evidence="1">
    <location>
        <position position="2"/>
    </location>
</feature>
<sequence length="104" mass="11456">MGDVEKGKKVFVQKCAQCHTVENGGKHKVGPNLWGLFGRKTGQAEGFSYTDANKSKGIVWGEDTLMEYLENPKKYIPGTKMIFAGIKKKGERADLIAYLKSATS</sequence>
<protein>
    <recommendedName>
        <fullName>Cytochrome c</fullName>
    </recommendedName>
</protein>
<organism>
    <name type="scientific">Danio rerio</name>
    <name type="common">Zebrafish</name>
    <name type="synonym">Brachydanio rerio</name>
    <dbReference type="NCBI Taxonomy" id="7955"/>
    <lineage>
        <taxon>Eukaryota</taxon>
        <taxon>Metazoa</taxon>
        <taxon>Chordata</taxon>
        <taxon>Craniata</taxon>
        <taxon>Vertebrata</taxon>
        <taxon>Euteleostomi</taxon>
        <taxon>Actinopterygii</taxon>
        <taxon>Neopterygii</taxon>
        <taxon>Teleostei</taxon>
        <taxon>Ostariophysi</taxon>
        <taxon>Cypriniformes</taxon>
        <taxon>Danionidae</taxon>
        <taxon>Danioninae</taxon>
        <taxon>Danio</taxon>
    </lineage>
</organism>
<name>CYC_DANRE</name>
<comment type="function">
    <text evidence="1">Electron carrier protein. The oxidized form of the cytochrome c heme group can accept an electron from the heme group of the cytochrome c1 subunit of cytochrome reductase. Cytochrome c then transfers this electron to the cytochrome oxidase complex, the final protein carrier in the mitochondrial electron-transport chain (By similarity).</text>
</comment>
<comment type="subcellular location">
    <subcellularLocation>
        <location evidence="1">Mitochondrion intermembrane space</location>
    </subcellularLocation>
    <text evidence="1">Loosely associated with the inner membrane.</text>
</comment>
<comment type="PTM">
    <text evidence="1">Binds 1 heme c group covalently per subunit.</text>
</comment>
<comment type="similarity">
    <text evidence="2">Belongs to the cytochrome c family.</text>
</comment>
<comment type="online information" name="Protein Spotlight">
    <link uri="https://www.proteinspotlight.org/back_issues/076"/>
    <text>Life shuttle - Issue 76 of November 2006</text>
</comment>
<accession>Q6IQM2</accession>
<proteinExistence type="inferred from homology"/>
<evidence type="ECO:0000250" key="1"/>
<evidence type="ECO:0000305" key="2"/>
<reference key="1">
    <citation type="submission" date="2004-06" db="EMBL/GenBank/DDBJ databases">
        <authorList>
            <consortium name="NIH - Zebrafish Gene Collection (ZGC) project"/>
        </authorList>
    </citation>
    <scope>NUCLEOTIDE SEQUENCE [LARGE SCALE MRNA]</scope>
    <source>
        <tissue>Embryo</tissue>
    </source>
</reference>